<sequence length="196" mass="22235">MPQAQIRKTQRNPKLWIAALVAASIVTISYKVYSSYIAEENIEDKKTEGDGGVEEKLRIAKRYTKKSIALTLSHSVLSSQLPLNEILLNSENVTFILPPNLSMDDLVCNIGNADEVERYNLPKTLLNNYKLLHCSNIDGYFNILKNLKPDTLLVCSEDLGIANNVPRDLHRFVKEIINIDQNKDDIYKKLSSIFIK</sequence>
<organism>
    <name type="scientific">Debaryomyces hansenii (strain ATCC 36239 / CBS 767 / BCRC 21394 / JCM 1990 / NBRC 0083 / IGC 2968)</name>
    <name type="common">Yeast</name>
    <name type="synonym">Torulaspora hansenii</name>
    <dbReference type="NCBI Taxonomy" id="284592"/>
    <lineage>
        <taxon>Eukaryota</taxon>
        <taxon>Fungi</taxon>
        <taxon>Dikarya</taxon>
        <taxon>Ascomycota</taxon>
        <taxon>Saccharomycotina</taxon>
        <taxon>Pichiomycetes</taxon>
        <taxon>Debaryomycetaceae</taxon>
        <taxon>Debaryomyces</taxon>
    </lineage>
</organism>
<gene>
    <name type="primary">PEX22</name>
    <name type="ordered locus">DEHA2F01386g</name>
</gene>
<comment type="function">
    <text evidence="1">Involved in peroxisome biogenesis.</text>
</comment>
<comment type="subcellular location">
    <subcellularLocation>
        <location evidence="1">Peroxisome membrane</location>
        <topology evidence="1">Single-pass membrane protein</topology>
    </subcellularLocation>
</comment>
<comment type="similarity">
    <text evidence="3">Belongs to the peroxin-22 family.</text>
</comment>
<proteinExistence type="inferred from homology"/>
<protein>
    <recommendedName>
        <fullName>Peroxisome assembly protein 22</fullName>
        <shortName>Peroxin-22</shortName>
    </recommendedName>
</protein>
<evidence type="ECO:0000250" key="1"/>
<evidence type="ECO:0000255" key="2"/>
<evidence type="ECO:0000305" key="3"/>
<feature type="chain" id="PRO_0000058336" description="Peroxisome assembly protein 22">
    <location>
        <begin position="1"/>
        <end position="196"/>
    </location>
</feature>
<feature type="transmembrane region" description="Helical" evidence="2">
    <location>
        <begin position="15"/>
        <end position="37"/>
    </location>
</feature>
<accession>Q6BMZ7</accession>
<keyword id="KW-0472">Membrane</keyword>
<keyword id="KW-0576">Peroxisome</keyword>
<keyword id="KW-0962">Peroxisome biogenesis</keyword>
<keyword id="KW-1185">Reference proteome</keyword>
<keyword id="KW-0812">Transmembrane</keyword>
<keyword id="KW-1133">Transmembrane helix</keyword>
<dbReference type="EMBL" id="CR382138">
    <property type="protein sequence ID" value="CAG88727.1"/>
    <property type="molecule type" value="Genomic_DNA"/>
</dbReference>
<dbReference type="RefSeq" id="XP_460423.1">
    <property type="nucleotide sequence ID" value="XM_460423.1"/>
</dbReference>
<dbReference type="SMR" id="Q6BMZ7"/>
<dbReference type="FunCoup" id="Q6BMZ7">
    <property type="interactions" value="23"/>
</dbReference>
<dbReference type="GeneID" id="2903823"/>
<dbReference type="KEGG" id="dha:DEHA2F01386g"/>
<dbReference type="VEuPathDB" id="FungiDB:DEHA2F01386g"/>
<dbReference type="eggNOG" id="ENOG502S5ME">
    <property type="taxonomic scope" value="Eukaryota"/>
</dbReference>
<dbReference type="HOGENOM" id="CLU_1402917_0_0_1"/>
<dbReference type="InParanoid" id="Q6BMZ7"/>
<dbReference type="OMA" id="SENMIFI"/>
<dbReference type="OrthoDB" id="4014227at2759"/>
<dbReference type="Proteomes" id="UP000000599">
    <property type="component" value="Chromosome F"/>
</dbReference>
<dbReference type="GO" id="GO:0005778">
    <property type="term" value="C:peroxisomal membrane"/>
    <property type="evidence" value="ECO:0007669"/>
    <property type="project" value="UniProtKB-SubCell"/>
</dbReference>
<dbReference type="GO" id="GO:0007031">
    <property type="term" value="P:peroxisome organization"/>
    <property type="evidence" value="ECO:0007669"/>
    <property type="project" value="UniProtKB-KW"/>
</dbReference>
<dbReference type="Gene3D" id="3.40.50.11730">
    <property type="entry name" value="Peroxisome assembly protein 22"/>
    <property type="match status" value="1"/>
</dbReference>
<dbReference type="InterPro" id="IPR024359">
    <property type="entry name" value="Peroxin-22"/>
</dbReference>
<dbReference type="InterPro" id="IPR038613">
    <property type="entry name" value="Peroxin-22_C_sf"/>
</dbReference>
<dbReference type="Pfam" id="PF12827">
    <property type="entry name" value="Peroxin-22"/>
    <property type="match status" value="1"/>
</dbReference>
<name>PEX22_DEBHA</name>
<reference key="1">
    <citation type="journal article" date="2004" name="Nature">
        <title>Genome evolution in yeasts.</title>
        <authorList>
            <person name="Dujon B."/>
            <person name="Sherman D."/>
            <person name="Fischer G."/>
            <person name="Durrens P."/>
            <person name="Casaregola S."/>
            <person name="Lafontaine I."/>
            <person name="de Montigny J."/>
            <person name="Marck C."/>
            <person name="Neuveglise C."/>
            <person name="Talla E."/>
            <person name="Goffard N."/>
            <person name="Frangeul L."/>
            <person name="Aigle M."/>
            <person name="Anthouard V."/>
            <person name="Babour A."/>
            <person name="Barbe V."/>
            <person name="Barnay S."/>
            <person name="Blanchin S."/>
            <person name="Beckerich J.-M."/>
            <person name="Beyne E."/>
            <person name="Bleykasten C."/>
            <person name="Boisrame A."/>
            <person name="Boyer J."/>
            <person name="Cattolico L."/>
            <person name="Confanioleri F."/>
            <person name="de Daruvar A."/>
            <person name="Despons L."/>
            <person name="Fabre E."/>
            <person name="Fairhead C."/>
            <person name="Ferry-Dumazet H."/>
            <person name="Groppi A."/>
            <person name="Hantraye F."/>
            <person name="Hennequin C."/>
            <person name="Jauniaux N."/>
            <person name="Joyet P."/>
            <person name="Kachouri R."/>
            <person name="Kerrest A."/>
            <person name="Koszul R."/>
            <person name="Lemaire M."/>
            <person name="Lesur I."/>
            <person name="Ma L."/>
            <person name="Muller H."/>
            <person name="Nicaud J.-M."/>
            <person name="Nikolski M."/>
            <person name="Oztas S."/>
            <person name="Ozier-Kalogeropoulos O."/>
            <person name="Pellenz S."/>
            <person name="Potier S."/>
            <person name="Richard G.-F."/>
            <person name="Straub M.-L."/>
            <person name="Suleau A."/>
            <person name="Swennen D."/>
            <person name="Tekaia F."/>
            <person name="Wesolowski-Louvel M."/>
            <person name="Westhof E."/>
            <person name="Wirth B."/>
            <person name="Zeniou-Meyer M."/>
            <person name="Zivanovic Y."/>
            <person name="Bolotin-Fukuhara M."/>
            <person name="Thierry A."/>
            <person name="Bouchier C."/>
            <person name="Caudron B."/>
            <person name="Scarpelli C."/>
            <person name="Gaillardin C."/>
            <person name="Weissenbach J."/>
            <person name="Wincker P."/>
            <person name="Souciet J.-L."/>
        </authorList>
    </citation>
    <scope>NUCLEOTIDE SEQUENCE [LARGE SCALE GENOMIC DNA]</scope>
    <source>
        <strain>ATCC 36239 / CBS 767 / BCRC 21394 / JCM 1990 / NBRC 0083 / IGC 2968</strain>
    </source>
</reference>